<keyword id="KW-0002">3D-structure</keyword>
<keyword id="KW-0025">Alternative splicing</keyword>
<keyword id="KW-0094">Blood coagulation</keyword>
<keyword id="KW-0106">Calcium</keyword>
<keyword id="KW-0175">Coiled coil</keyword>
<keyword id="KW-0903">Direct protein sequencing</keyword>
<keyword id="KW-1015">Disulfide bond</keyword>
<keyword id="KW-0356">Hemostasis</keyword>
<keyword id="KW-0479">Metal-binding</keyword>
<keyword id="KW-0873">Pyrrolidone carboxylic acid</keyword>
<keyword id="KW-1185">Reference proteome</keyword>
<keyword id="KW-0964">Secreted</keyword>
<keyword id="KW-0732">Signal</keyword>
<protein>
    <recommendedName>
        <fullName>Fibrinogen alpha chain</fullName>
    </recommendedName>
    <component>
        <recommendedName>
            <fullName>Fibrinopeptide A</fullName>
        </recommendedName>
    </component>
    <component>
        <recommendedName>
            <fullName>Fibrinogen alpha chain</fullName>
        </recommendedName>
    </component>
</protein>
<name>FIBA_CHICK</name>
<reference key="1">
    <citation type="submission" date="1995-02" db="EMBL/GenBank/DDBJ databases">
        <authorList>
            <person name="Greininger G."/>
        </authorList>
    </citation>
    <scope>NUCLEOTIDE SEQUENCE OF 1-4</scope>
</reference>
<reference key="2">
    <citation type="journal article" date="1990" name="Proc. Natl. Acad. Sci. U.S.A.">
        <title>Bipartite mRNA for chicken alpha-fibrinogen potentially encodes an amino acid sequence homologous to beta- and gamma-fibrinogens.</title>
        <authorList>
            <person name="Weissbach L."/>
            <person name="Grieninger G."/>
        </authorList>
    </citation>
    <scope>NUCLEOTIDE SEQUENCE [MRNA] OF 5-741</scope>
</reference>
<reference key="3">
    <citation type="journal article" date="1978" name="Biochim. Biophys. Acta">
        <title>Amino acid sequence of chicken fibrinopeptide A.</title>
        <authorList>
            <person name="Takagi T."/>
            <person name="Finlayson J.S."/>
            <person name="Iwanaga S."/>
        </authorList>
    </citation>
    <scope>PROTEIN SEQUENCE OF 19-33</scope>
    <scope>PYROGLUTAMATE FORMATION AT GLN-19</scope>
</reference>
<reference key="4">
    <citation type="journal article" date="2000" name="Proc. Natl. Acad. Sci. U.S.A.">
        <title>Crystal structure of native chicken fibrinogen at 5.5-A resolution.</title>
        <authorList>
            <person name="Yang Z."/>
            <person name="Mochalkin I."/>
            <person name="Veerapandian L."/>
            <person name="Riley M."/>
            <person name="Doolittle R.F."/>
        </authorList>
    </citation>
    <scope>X-RAY CRYSTALLOGRAPHY (5.5 ANGSTROMS) OF 19-509</scope>
    <scope>SUBCELLULAR LOCATION</scope>
    <scope>SUBUNIT</scope>
    <scope>COILED COIL DOMAIN</scope>
</reference>
<reference key="5">
    <citation type="journal article" date="2001" name="Biochemistry">
        <title>Crystal structure of native chicken fibrinogen at 2.7 A resolution.</title>
        <authorList>
            <person name="Yang Z."/>
            <person name="Kollman J.M."/>
            <person name="Pandi L."/>
            <person name="Doolittle R.F."/>
        </authorList>
    </citation>
    <scope>X-RAY CRYSTALLOGRAPHY (2.70 ANGSTROMS) OF 19-505</scope>
    <scope>SUBUNIT</scope>
    <scope>DISULFIDE BONDS</scope>
    <scope>COILED COIL DOMAIN</scope>
    <scope>SUBCELLULAR LOCATION</scope>
</reference>
<evidence type="ECO:0000250" key="1">
    <source>
        <dbReference type="UniProtKB" id="E9PV24"/>
    </source>
</evidence>
<evidence type="ECO:0000250" key="2">
    <source>
        <dbReference type="UniProtKB" id="P02671"/>
    </source>
</evidence>
<evidence type="ECO:0000255" key="3">
    <source>
        <dbReference type="PROSITE-ProRule" id="PRU00739"/>
    </source>
</evidence>
<evidence type="ECO:0000256" key="4">
    <source>
        <dbReference type="SAM" id="MobiDB-lite"/>
    </source>
</evidence>
<evidence type="ECO:0000269" key="5">
    <source>
    </source>
</evidence>
<evidence type="ECO:0000269" key="6">
    <source>
    </source>
</evidence>
<evidence type="ECO:0000269" key="7">
    <source>
    </source>
</evidence>
<evidence type="ECO:0000305" key="8"/>
<evidence type="ECO:0007829" key="9">
    <source>
        <dbReference type="PDB" id="1M1J"/>
    </source>
</evidence>
<proteinExistence type="evidence at protein level"/>
<gene>
    <name type="primary">FGA</name>
</gene>
<accession>P14448</accession>
<sequence length="741" mass="82438">MIPVTILCVLLCLNLAWAQDGKTTFEKEGGGGRGPRILENMHESSCKYEKNWPICVDDDWGTKCPSCCRMQGIIDDTDQNYSQRIDNIRQQLADSQNKYKTSNRVIVETINILKPGLEGAQQLDENYGHVSTELRRRIVTLKQRVATQVNRIKALQNSIQEQVVEMKRLEVDIDIKIRACKGSCARSFDYQVDKEGYDNIQKHLTQASSIDMHPDFQTTTLSTLKMRPLKDSNVPEHFKLKPSPEMQAMSAFNNIKQMQVVLERPETDHVAEARGDSSPSHTGKLITSSHRRESPSLVDKTSSASSVHRCTRTVTKKVISGPDGPREEIVEKMVSSDGSDCSHLQGGREGSTYHFSGTGDFHKLDRLLPDLESFFTHDSVSTSSRHSIGSSTSSHVTGAGSSHLGTGGKDKFTDLGEEEEDDFGGLQPSGFAAGSASHSKTVLTSSSSSFNKGGSTFETKSLKTRETSEQLGGVQHDQSAEDTPDFKARSFRPAAMSTRRSYNGKDCDDIRQKHTSGAKSGIFKIKPEGSNKVLSVYCDQETTLGGWLLIQQRMDGSVNFNRTWQDYRRGFGSVDGKGQGELWLGNENIHLLTQNDTLLRVELEDWDGNAAYAEYIVQVGTEAEGYALTVSSYEGTAGDALVAGWLEEGSEYTSHAQMQFSTFDRDQDHWEESCAEVYGGGWWYNSCQAANLNGIYYPGGHYDPRYNVPYEIENGVVWIPFRASDYSLKVVRMKIRPLETL</sequence>
<organism>
    <name type="scientific">Gallus gallus</name>
    <name type="common">Chicken</name>
    <dbReference type="NCBI Taxonomy" id="9031"/>
    <lineage>
        <taxon>Eukaryota</taxon>
        <taxon>Metazoa</taxon>
        <taxon>Chordata</taxon>
        <taxon>Craniata</taxon>
        <taxon>Vertebrata</taxon>
        <taxon>Euteleostomi</taxon>
        <taxon>Archelosauria</taxon>
        <taxon>Archosauria</taxon>
        <taxon>Dinosauria</taxon>
        <taxon>Saurischia</taxon>
        <taxon>Theropoda</taxon>
        <taxon>Coelurosauria</taxon>
        <taxon>Aves</taxon>
        <taxon>Neognathae</taxon>
        <taxon>Galloanserae</taxon>
        <taxon>Galliformes</taxon>
        <taxon>Phasianidae</taxon>
        <taxon>Phasianinae</taxon>
        <taxon>Gallus</taxon>
    </lineage>
</organism>
<comment type="function">
    <text evidence="1">Cleaved by the protease thrombin to yield monomers which, together with fibrinogen beta (FGB) and fibrinogen gamma (FGG), polymerize to form an insoluble fibrin matrix. Fibrin has a major function in hemostasis as one of the primary components of blood clots.</text>
</comment>
<comment type="subunit">
    <text evidence="5 6">Heterohexamer; disulfide linked. Contains 2 sets of 3 non-identical chains (alpha, beta and gamma). The 2 heterotrimers are in head to head conformation with the N-termini in a small central domain.</text>
</comment>
<comment type="subcellular location">
    <subcellularLocation>
        <location evidence="5 6">Secreted</location>
    </subcellularLocation>
</comment>
<comment type="alternative products">
    <event type="alternative splicing"/>
    <isoform>
        <id>P14448-1</id>
        <name>1</name>
        <name>Alpha-E</name>
        <sequence type="displayed"/>
    </isoform>
    <isoform>
        <id>P14448-2</id>
        <name>2</name>
        <name>Alpha</name>
        <sequence type="described" ref="VSP_001535 VSP_001536"/>
    </isoform>
</comment>
<comment type="domain">
    <text evidence="5 6">A long coiled coil structure formed by 3 polypeptide chains connects the central nodule to the C-terminal domains (distal nodules). The long C-terminal ends of the alpha chains fold back, contributing a fourth strand to the coiled coil structure.</text>
</comment>
<comment type="PTM">
    <text>Conversion of fibrinogen to fibrin is triggered by thrombin, which cleaves fibrinopeptides A and B from alpha and beta chains, and thus exposes the N-terminal polymerization sites responsible for the formation of the soft clot. The soft clot is converted into the hard clot by factor XIIIA which catalyzes the epsilon-(gamma-glutamyl)lysine cross-linking between gamma chains (stronger) and between alpha chains (weaker) of different monomers.</text>
</comment>
<comment type="PTM">
    <text>Forms F13A-mediated cross-links between a glutamine and the epsilon-amino group of a lysine residue, forming fibronectin-fibrinogen heteropolymers.</text>
</comment>
<feature type="signal peptide" evidence="7">
    <location>
        <begin position="1"/>
        <end position="18"/>
    </location>
</feature>
<feature type="peptide" id="PRO_0000009046" description="Fibrinopeptide A">
    <location>
        <begin position="19"/>
        <end position="33"/>
    </location>
</feature>
<feature type="chain" id="PRO_0000009047" description="Fibrinogen alpha chain">
    <location>
        <begin position="34"/>
        <end position="741"/>
    </location>
</feature>
<feature type="domain" description="Fibrinogen C-terminal" evidence="3">
    <location>
        <begin position="498"/>
        <end position="739"/>
    </location>
</feature>
<feature type="region of interest" description="Disordered" evidence="4">
    <location>
        <begin position="270"/>
        <end position="307"/>
    </location>
</feature>
<feature type="region of interest" description="Disordered" evidence="4">
    <location>
        <begin position="381"/>
        <end position="510"/>
    </location>
</feature>
<feature type="coiled-coil region" evidence="5 6">
    <location>
        <begin position="67"/>
        <end position="506"/>
    </location>
</feature>
<feature type="compositionally biased region" description="Polar residues" evidence="4">
    <location>
        <begin position="277"/>
        <end position="288"/>
    </location>
</feature>
<feature type="compositionally biased region" description="Low complexity" evidence="4">
    <location>
        <begin position="381"/>
        <end position="398"/>
    </location>
</feature>
<feature type="compositionally biased region" description="Low complexity" evidence="4">
    <location>
        <begin position="435"/>
        <end position="449"/>
    </location>
</feature>
<feature type="compositionally biased region" description="Polar residues" evidence="4">
    <location>
        <begin position="450"/>
        <end position="459"/>
    </location>
</feature>
<feature type="binding site" evidence="2">
    <location>
        <position position="666"/>
    </location>
    <ligand>
        <name>Ca(2+)</name>
        <dbReference type="ChEBI" id="CHEBI:29108"/>
    </ligand>
</feature>
<feature type="binding site" evidence="2">
    <location>
        <position position="668"/>
    </location>
    <ligand>
        <name>Ca(2+)</name>
        <dbReference type="ChEBI" id="CHEBI:29108"/>
    </ligand>
</feature>
<feature type="binding site" evidence="2">
    <location>
        <position position="670"/>
    </location>
    <ligand>
        <name>Ca(2+)</name>
        <dbReference type="ChEBI" id="CHEBI:29108"/>
    </ligand>
</feature>
<feature type="binding site" evidence="2">
    <location>
        <position position="672"/>
    </location>
    <ligand>
        <name>Ca(2+)</name>
        <dbReference type="ChEBI" id="CHEBI:29108"/>
    </ligand>
</feature>
<feature type="site" description="Cleavage; by thrombin; to release fibrinopeptide A">
    <location>
        <begin position="33"/>
        <end position="34"/>
    </location>
</feature>
<feature type="modified residue" description="Pyrrolidone carboxylic acid" evidence="7">
    <location>
        <position position="19"/>
    </location>
</feature>
<feature type="disulfide bond" description="Interchain (with alpha chain)" evidence="6">
    <location>
        <position position="46"/>
    </location>
</feature>
<feature type="disulfide bond" description="Interchain (with beta chain)" evidence="6">
    <location>
        <position position="55"/>
    </location>
</feature>
<feature type="disulfide bond" description="Interchain (with gamma chain)" evidence="6">
    <location>
        <position position="64"/>
    </location>
</feature>
<feature type="disulfide bond" description="Interchain (with beta chain)" evidence="6">
    <location>
        <position position="68"/>
    </location>
</feature>
<feature type="disulfide bond" description="Interchain (with gamma chain)" evidence="6">
    <location>
        <position position="180"/>
    </location>
</feature>
<feature type="disulfide bond" description="Interchain (with beta chain)" evidence="6">
    <location>
        <position position="184"/>
    </location>
</feature>
<feature type="disulfide bond" evidence="3">
    <location>
        <begin position="310"/>
        <end position="341"/>
    </location>
</feature>
<feature type="disulfide bond" evidence="2">
    <location>
        <begin position="674"/>
        <end position="687"/>
    </location>
</feature>
<feature type="splice variant" id="VSP_001535" description="In isoform 2." evidence="8">
    <original>DCDD</original>
    <variation>GTQK</variation>
    <location>
        <begin position="506"/>
        <end position="509"/>
    </location>
</feature>
<feature type="splice variant" id="VSP_001536" description="In isoform 2." evidence="8">
    <location>
        <begin position="510"/>
        <end position="741"/>
    </location>
</feature>
<feature type="turn" evidence="9">
    <location>
        <begin position="60"/>
        <end position="62"/>
    </location>
</feature>
<feature type="helix" evidence="9">
    <location>
        <begin position="70"/>
        <end position="97"/>
    </location>
</feature>
<feature type="turn" evidence="9">
    <location>
        <begin position="98"/>
        <end position="100"/>
    </location>
</feature>
<feature type="helix" evidence="9">
    <location>
        <begin position="101"/>
        <end position="178"/>
    </location>
</feature>
<feature type="turn" evidence="9">
    <location>
        <begin position="179"/>
        <end position="183"/>
    </location>
</feature>
<feature type="strand" evidence="9">
    <location>
        <begin position="184"/>
        <end position="186"/>
    </location>
</feature>
<feature type="turn" evidence="9">
    <location>
        <begin position="194"/>
        <end position="197"/>
    </location>
</feature>
<feature type="helix" evidence="9">
    <location>
        <begin position="198"/>
        <end position="207"/>
    </location>
</feature>
<feature type="turn" evidence="9">
    <location>
        <begin position="232"/>
        <end position="235"/>
    </location>
</feature>
<dbReference type="EMBL" id="U20803">
    <property type="protein sequence ID" value="AAB60686.1"/>
    <property type="molecule type" value="Genomic_DNA"/>
</dbReference>
<dbReference type="EMBL" id="U20799">
    <property type="protein sequence ID" value="AAB60686.1"/>
    <property type="status" value="JOINED"/>
    <property type="molecule type" value="Genomic_DNA"/>
</dbReference>
<dbReference type="EMBL" id="U20800">
    <property type="protein sequence ID" value="AAB60686.1"/>
    <property type="status" value="JOINED"/>
    <property type="molecule type" value="Genomic_DNA"/>
</dbReference>
<dbReference type="EMBL" id="U20801">
    <property type="protein sequence ID" value="AAB60686.1"/>
    <property type="status" value="JOINED"/>
    <property type="molecule type" value="Genomic_DNA"/>
</dbReference>
<dbReference type="EMBL" id="U20802">
    <property type="protein sequence ID" value="AAB60686.1"/>
    <property type="status" value="JOINED"/>
    <property type="molecule type" value="Genomic_DNA"/>
</dbReference>
<dbReference type="EMBL" id="U20803">
    <property type="protein sequence ID" value="AAB60685.1"/>
    <property type="molecule type" value="Genomic_DNA"/>
</dbReference>
<dbReference type="EMBL" id="U20799">
    <property type="protein sequence ID" value="AAB60685.1"/>
    <property type="status" value="JOINED"/>
    <property type="molecule type" value="Genomic_DNA"/>
</dbReference>
<dbReference type="EMBL" id="U20800">
    <property type="protein sequence ID" value="AAB60685.1"/>
    <property type="status" value="JOINED"/>
    <property type="molecule type" value="Genomic_DNA"/>
</dbReference>
<dbReference type="EMBL" id="U20801">
    <property type="protein sequence ID" value="AAB60685.1"/>
    <property type="status" value="JOINED"/>
    <property type="molecule type" value="Genomic_DNA"/>
</dbReference>
<dbReference type="EMBL" id="U20802">
    <property type="protein sequence ID" value="AAB60685.1"/>
    <property type="status" value="JOINED"/>
    <property type="molecule type" value="Genomic_DNA"/>
</dbReference>
<dbReference type="EMBL" id="M34096">
    <property type="protein sequence ID" value="AAA99306.1"/>
    <property type="molecule type" value="mRNA"/>
</dbReference>
<dbReference type="EMBL" id="M34096">
    <property type="protein sequence ID" value="AAA99307.1"/>
    <property type="molecule type" value="mRNA"/>
</dbReference>
<dbReference type="PDB" id="1EI3">
    <property type="method" value="X-ray"/>
    <property type="resolution" value="5.50 A"/>
    <property type="chains" value="A/D=19-505"/>
</dbReference>
<dbReference type="PDB" id="1M1J">
    <property type="method" value="X-ray"/>
    <property type="resolution" value="2.70 A"/>
    <property type="chains" value="A/D=19-505"/>
</dbReference>
<dbReference type="PDBsum" id="1EI3"/>
<dbReference type="PDBsum" id="1M1J"/>
<dbReference type="SMR" id="P14448"/>
<dbReference type="FunCoup" id="P14448">
    <property type="interactions" value="538"/>
</dbReference>
<dbReference type="STRING" id="9031.ENSGALP00000015061"/>
<dbReference type="PaxDb" id="9031-ENSGALP00000015061"/>
<dbReference type="VEuPathDB" id="HostDB:geneid_396307"/>
<dbReference type="eggNOG" id="KOG2579">
    <property type="taxonomic scope" value="Eukaryota"/>
</dbReference>
<dbReference type="InParanoid" id="P14448"/>
<dbReference type="OrthoDB" id="9945370at2759"/>
<dbReference type="PhylomeDB" id="P14448"/>
<dbReference type="EvolutionaryTrace" id="P14448"/>
<dbReference type="Proteomes" id="UP000000539">
    <property type="component" value="Unassembled WGS sequence"/>
</dbReference>
<dbReference type="GO" id="GO:0005577">
    <property type="term" value="C:fibrinogen complex"/>
    <property type="evidence" value="ECO:0000315"/>
    <property type="project" value="CAFA"/>
</dbReference>
<dbReference type="GO" id="GO:0046872">
    <property type="term" value="F:metal ion binding"/>
    <property type="evidence" value="ECO:0007669"/>
    <property type="project" value="UniProtKB-KW"/>
</dbReference>
<dbReference type="GO" id="GO:0030674">
    <property type="term" value="F:protein-macromolecule adaptor activity"/>
    <property type="evidence" value="ECO:0000353"/>
    <property type="project" value="CAFA"/>
</dbReference>
<dbReference type="GO" id="GO:0005102">
    <property type="term" value="F:signaling receptor binding"/>
    <property type="evidence" value="ECO:0007669"/>
    <property type="project" value="InterPro"/>
</dbReference>
<dbReference type="GO" id="GO:0072377">
    <property type="term" value="P:blood coagulation, common pathway"/>
    <property type="evidence" value="ECO:0000318"/>
    <property type="project" value="GO_Central"/>
</dbReference>
<dbReference type="GO" id="GO:0042730">
    <property type="term" value="P:fibrinolysis"/>
    <property type="evidence" value="ECO:0000318"/>
    <property type="project" value="GO_Central"/>
</dbReference>
<dbReference type="GO" id="GO:0070527">
    <property type="term" value="P:platelet aggregation"/>
    <property type="evidence" value="ECO:0000318"/>
    <property type="project" value="GO_Central"/>
</dbReference>
<dbReference type="GO" id="GO:0034116">
    <property type="term" value="P:positive regulation of heterotypic cell-cell adhesion"/>
    <property type="evidence" value="ECO:0000318"/>
    <property type="project" value="GO_Central"/>
</dbReference>
<dbReference type="GO" id="GO:0051258">
    <property type="term" value="P:protein polymerization"/>
    <property type="evidence" value="ECO:0007669"/>
    <property type="project" value="InterPro"/>
</dbReference>
<dbReference type="CDD" id="cd00087">
    <property type="entry name" value="FReD"/>
    <property type="match status" value="1"/>
</dbReference>
<dbReference type="DisProt" id="DP00233"/>
<dbReference type="FunFam" id="1.20.5.50:FF:000006">
    <property type="entry name" value="Fibrinogen alpha chain"/>
    <property type="match status" value="1"/>
</dbReference>
<dbReference type="Gene3D" id="1.20.5.50">
    <property type="match status" value="1"/>
</dbReference>
<dbReference type="Gene3D" id="3.90.215.10">
    <property type="entry name" value="Gamma Fibrinogen, chain A, domain 1"/>
    <property type="match status" value="1"/>
</dbReference>
<dbReference type="Gene3D" id="4.10.530.10">
    <property type="entry name" value="Gamma-fibrinogen Carboxyl Terminal Fragment, domain 2"/>
    <property type="match status" value="1"/>
</dbReference>
<dbReference type="InterPro" id="IPR037579">
    <property type="entry name" value="FIB_ANG-like"/>
</dbReference>
<dbReference type="InterPro" id="IPR036056">
    <property type="entry name" value="Fibrinogen-like_C"/>
</dbReference>
<dbReference type="InterPro" id="IPR014716">
    <property type="entry name" value="Fibrinogen_a/b/g_C_1"/>
</dbReference>
<dbReference type="InterPro" id="IPR002181">
    <property type="entry name" value="Fibrinogen_a/b/g_C_dom"/>
</dbReference>
<dbReference type="InterPro" id="IPR012290">
    <property type="entry name" value="Fibrinogen_a/b/g_coil_dom"/>
</dbReference>
<dbReference type="InterPro" id="IPR021996">
    <property type="entry name" value="Fibrinogen_aC"/>
</dbReference>
<dbReference type="InterPro" id="IPR020837">
    <property type="entry name" value="Fibrinogen_CS"/>
</dbReference>
<dbReference type="NCBIfam" id="NF040941">
    <property type="entry name" value="GGGWT_bact"/>
    <property type="match status" value="1"/>
</dbReference>
<dbReference type="PANTHER" id="PTHR47221">
    <property type="entry name" value="FIBRINOGEN ALPHA CHAIN"/>
    <property type="match status" value="1"/>
</dbReference>
<dbReference type="PANTHER" id="PTHR47221:SF3">
    <property type="entry name" value="FIBRINOGEN ALPHA CHAIN"/>
    <property type="match status" value="1"/>
</dbReference>
<dbReference type="Pfam" id="PF08702">
    <property type="entry name" value="Fib_alpha"/>
    <property type="match status" value="1"/>
</dbReference>
<dbReference type="Pfam" id="PF12160">
    <property type="entry name" value="Fibrinogen_aC"/>
    <property type="match status" value="1"/>
</dbReference>
<dbReference type="Pfam" id="PF00147">
    <property type="entry name" value="Fibrinogen_C"/>
    <property type="match status" value="1"/>
</dbReference>
<dbReference type="SMART" id="SM00186">
    <property type="entry name" value="FBG"/>
    <property type="match status" value="1"/>
</dbReference>
<dbReference type="SMART" id="SM01212">
    <property type="entry name" value="Fib_alpha"/>
    <property type="match status" value="1"/>
</dbReference>
<dbReference type="SUPFAM" id="SSF56496">
    <property type="entry name" value="Fibrinogen C-terminal domain-like"/>
    <property type="match status" value="1"/>
</dbReference>
<dbReference type="SUPFAM" id="SSF58010">
    <property type="entry name" value="Fibrinogen coiled-coil and central regions"/>
    <property type="match status" value="1"/>
</dbReference>
<dbReference type="PROSITE" id="PS00514">
    <property type="entry name" value="FIBRINOGEN_C_1"/>
    <property type="match status" value="1"/>
</dbReference>
<dbReference type="PROSITE" id="PS51406">
    <property type="entry name" value="FIBRINOGEN_C_2"/>
    <property type="match status" value="1"/>
</dbReference>